<protein>
    <recommendedName>
        <fullName evidence="1">Enolase</fullName>
        <ecNumber evidence="1">4.2.1.11</ecNumber>
    </recommendedName>
    <alternativeName>
        <fullName evidence="1">2-phospho-D-glycerate hydro-lyase</fullName>
    </alternativeName>
    <alternativeName>
        <fullName evidence="1">2-phosphoglycerate dehydratase</fullName>
    </alternativeName>
</protein>
<feature type="chain" id="PRO_1000115823" description="Enolase">
    <location>
        <begin position="1"/>
        <end position="432"/>
    </location>
</feature>
<feature type="active site" description="Proton donor" evidence="1">
    <location>
        <position position="209"/>
    </location>
</feature>
<feature type="active site" description="Proton acceptor" evidence="1">
    <location>
        <position position="343"/>
    </location>
</feature>
<feature type="binding site" evidence="1">
    <location>
        <position position="167"/>
    </location>
    <ligand>
        <name>(2R)-2-phosphoglycerate</name>
        <dbReference type="ChEBI" id="CHEBI:58289"/>
    </ligand>
</feature>
<feature type="binding site" evidence="1">
    <location>
        <position position="246"/>
    </location>
    <ligand>
        <name>Mg(2+)</name>
        <dbReference type="ChEBI" id="CHEBI:18420"/>
    </ligand>
</feature>
<feature type="binding site" evidence="1">
    <location>
        <position position="291"/>
    </location>
    <ligand>
        <name>Mg(2+)</name>
        <dbReference type="ChEBI" id="CHEBI:18420"/>
    </ligand>
</feature>
<feature type="binding site" evidence="1">
    <location>
        <position position="318"/>
    </location>
    <ligand>
        <name>Mg(2+)</name>
        <dbReference type="ChEBI" id="CHEBI:18420"/>
    </ligand>
</feature>
<feature type="binding site" evidence="1">
    <location>
        <position position="343"/>
    </location>
    <ligand>
        <name>(2R)-2-phosphoglycerate</name>
        <dbReference type="ChEBI" id="CHEBI:58289"/>
    </ligand>
</feature>
<feature type="binding site" evidence="1">
    <location>
        <position position="372"/>
    </location>
    <ligand>
        <name>(2R)-2-phosphoglycerate</name>
        <dbReference type="ChEBI" id="CHEBI:58289"/>
    </ligand>
</feature>
<feature type="binding site" evidence="1">
    <location>
        <position position="373"/>
    </location>
    <ligand>
        <name>(2R)-2-phosphoglycerate</name>
        <dbReference type="ChEBI" id="CHEBI:58289"/>
    </ligand>
</feature>
<feature type="binding site" evidence="1">
    <location>
        <position position="394"/>
    </location>
    <ligand>
        <name>(2R)-2-phosphoglycerate</name>
        <dbReference type="ChEBI" id="CHEBI:58289"/>
    </ligand>
</feature>
<evidence type="ECO:0000255" key="1">
    <source>
        <dbReference type="HAMAP-Rule" id="MF_00318"/>
    </source>
</evidence>
<accession>B6EKL8</accession>
<keyword id="KW-0963">Cytoplasm</keyword>
<keyword id="KW-0324">Glycolysis</keyword>
<keyword id="KW-0456">Lyase</keyword>
<keyword id="KW-0460">Magnesium</keyword>
<keyword id="KW-0479">Metal-binding</keyword>
<keyword id="KW-0964">Secreted</keyword>
<name>ENO_ALISL</name>
<gene>
    <name evidence="1" type="primary">eno</name>
    <name type="ordered locus">VSAL_I2514</name>
</gene>
<reference key="1">
    <citation type="journal article" date="2008" name="BMC Genomics">
        <title>The genome sequence of the fish pathogen Aliivibrio salmonicida strain LFI1238 shows extensive evidence of gene decay.</title>
        <authorList>
            <person name="Hjerde E."/>
            <person name="Lorentzen M.S."/>
            <person name="Holden M.T."/>
            <person name="Seeger K."/>
            <person name="Paulsen S."/>
            <person name="Bason N."/>
            <person name="Churcher C."/>
            <person name="Harris D."/>
            <person name="Norbertczak H."/>
            <person name="Quail M.A."/>
            <person name="Sanders S."/>
            <person name="Thurston S."/>
            <person name="Parkhill J."/>
            <person name="Willassen N.P."/>
            <person name="Thomson N.R."/>
        </authorList>
    </citation>
    <scope>NUCLEOTIDE SEQUENCE [LARGE SCALE GENOMIC DNA]</scope>
    <source>
        <strain>LFI1238</strain>
    </source>
</reference>
<organism>
    <name type="scientific">Aliivibrio salmonicida (strain LFI1238)</name>
    <name type="common">Vibrio salmonicida (strain LFI1238)</name>
    <dbReference type="NCBI Taxonomy" id="316275"/>
    <lineage>
        <taxon>Bacteria</taxon>
        <taxon>Pseudomonadati</taxon>
        <taxon>Pseudomonadota</taxon>
        <taxon>Gammaproteobacteria</taxon>
        <taxon>Vibrionales</taxon>
        <taxon>Vibrionaceae</taxon>
        <taxon>Aliivibrio</taxon>
    </lineage>
</organism>
<proteinExistence type="inferred from homology"/>
<dbReference type="EC" id="4.2.1.11" evidence="1"/>
<dbReference type="EMBL" id="FM178379">
    <property type="protein sequence ID" value="CAQ80198.1"/>
    <property type="molecule type" value="Genomic_DNA"/>
</dbReference>
<dbReference type="RefSeq" id="WP_012550986.1">
    <property type="nucleotide sequence ID" value="NC_011312.1"/>
</dbReference>
<dbReference type="SMR" id="B6EKL8"/>
<dbReference type="KEGG" id="vsa:VSAL_I2514"/>
<dbReference type="eggNOG" id="COG0148">
    <property type="taxonomic scope" value="Bacteria"/>
</dbReference>
<dbReference type="HOGENOM" id="CLU_031223_2_1_6"/>
<dbReference type="UniPathway" id="UPA00109">
    <property type="reaction ID" value="UER00187"/>
</dbReference>
<dbReference type="Proteomes" id="UP000001730">
    <property type="component" value="Chromosome 1"/>
</dbReference>
<dbReference type="GO" id="GO:0009986">
    <property type="term" value="C:cell surface"/>
    <property type="evidence" value="ECO:0007669"/>
    <property type="project" value="UniProtKB-SubCell"/>
</dbReference>
<dbReference type="GO" id="GO:0005576">
    <property type="term" value="C:extracellular region"/>
    <property type="evidence" value="ECO:0007669"/>
    <property type="project" value="UniProtKB-SubCell"/>
</dbReference>
<dbReference type="GO" id="GO:0000015">
    <property type="term" value="C:phosphopyruvate hydratase complex"/>
    <property type="evidence" value="ECO:0007669"/>
    <property type="project" value="InterPro"/>
</dbReference>
<dbReference type="GO" id="GO:0000287">
    <property type="term" value="F:magnesium ion binding"/>
    <property type="evidence" value="ECO:0007669"/>
    <property type="project" value="UniProtKB-UniRule"/>
</dbReference>
<dbReference type="GO" id="GO:0004634">
    <property type="term" value="F:phosphopyruvate hydratase activity"/>
    <property type="evidence" value="ECO:0007669"/>
    <property type="project" value="UniProtKB-UniRule"/>
</dbReference>
<dbReference type="GO" id="GO:0006096">
    <property type="term" value="P:glycolytic process"/>
    <property type="evidence" value="ECO:0007669"/>
    <property type="project" value="UniProtKB-UniRule"/>
</dbReference>
<dbReference type="CDD" id="cd03313">
    <property type="entry name" value="enolase"/>
    <property type="match status" value="1"/>
</dbReference>
<dbReference type="FunFam" id="3.20.20.120:FF:000001">
    <property type="entry name" value="Enolase"/>
    <property type="match status" value="1"/>
</dbReference>
<dbReference type="FunFam" id="3.30.390.10:FF:000001">
    <property type="entry name" value="Enolase"/>
    <property type="match status" value="1"/>
</dbReference>
<dbReference type="Gene3D" id="3.20.20.120">
    <property type="entry name" value="Enolase-like C-terminal domain"/>
    <property type="match status" value="1"/>
</dbReference>
<dbReference type="Gene3D" id="3.30.390.10">
    <property type="entry name" value="Enolase-like, N-terminal domain"/>
    <property type="match status" value="1"/>
</dbReference>
<dbReference type="HAMAP" id="MF_00318">
    <property type="entry name" value="Enolase"/>
    <property type="match status" value="1"/>
</dbReference>
<dbReference type="InterPro" id="IPR000941">
    <property type="entry name" value="Enolase"/>
</dbReference>
<dbReference type="InterPro" id="IPR036849">
    <property type="entry name" value="Enolase-like_C_sf"/>
</dbReference>
<dbReference type="InterPro" id="IPR029017">
    <property type="entry name" value="Enolase-like_N"/>
</dbReference>
<dbReference type="InterPro" id="IPR020810">
    <property type="entry name" value="Enolase_C"/>
</dbReference>
<dbReference type="InterPro" id="IPR020809">
    <property type="entry name" value="Enolase_CS"/>
</dbReference>
<dbReference type="InterPro" id="IPR020811">
    <property type="entry name" value="Enolase_N"/>
</dbReference>
<dbReference type="NCBIfam" id="TIGR01060">
    <property type="entry name" value="eno"/>
    <property type="match status" value="1"/>
</dbReference>
<dbReference type="PANTHER" id="PTHR11902">
    <property type="entry name" value="ENOLASE"/>
    <property type="match status" value="1"/>
</dbReference>
<dbReference type="PANTHER" id="PTHR11902:SF1">
    <property type="entry name" value="ENOLASE"/>
    <property type="match status" value="1"/>
</dbReference>
<dbReference type="Pfam" id="PF00113">
    <property type="entry name" value="Enolase_C"/>
    <property type="match status" value="1"/>
</dbReference>
<dbReference type="Pfam" id="PF03952">
    <property type="entry name" value="Enolase_N"/>
    <property type="match status" value="1"/>
</dbReference>
<dbReference type="PIRSF" id="PIRSF001400">
    <property type="entry name" value="Enolase"/>
    <property type="match status" value="1"/>
</dbReference>
<dbReference type="PRINTS" id="PR00148">
    <property type="entry name" value="ENOLASE"/>
</dbReference>
<dbReference type="SFLD" id="SFLDS00001">
    <property type="entry name" value="Enolase"/>
    <property type="match status" value="1"/>
</dbReference>
<dbReference type="SFLD" id="SFLDF00002">
    <property type="entry name" value="enolase"/>
    <property type="match status" value="1"/>
</dbReference>
<dbReference type="SMART" id="SM01192">
    <property type="entry name" value="Enolase_C"/>
    <property type="match status" value="1"/>
</dbReference>
<dbReference type="SMART" id="SM01193">
    <property type="entry name" value="Enolase_N"/>
    <property type="match status" value="1"/>
</dbReference>
<dbReference type="SUPFAM" id="SSF51604">
    <property type="entry name" value="Enolase C-terminal domain-like"/>
    <property type="match status" value="1"/>
</dbReference>
<dbReference type="SUPFAM" id="SSF54826">
    <property type="entry name" value="Enolase N-terminal domain-like"/>
    <property type="match status" value="1"/>
</dbReference>
<dbReference type="PROSITE" id="PS00164">
    <property type="entry name" value="ENOLASE"/>
    <property type="match status" value="1"/>
</dbReference>
<comment type="function">
    <text evidence="1">Catalyzes the reversible conversion of 2-phosphoglycerate (2-PG) into phosphoenolpyruvate (PEP). It is essential for the degradation of carbohydrates via glycolysis.</text>
</comment>
<comment type="catalytic activity">
    <reaction evidence="1">
        <text>(2R)-2-phosphoglycerate = phosphoenolpyruvate + H2O</text>
        <dbReference type="Rhea" id="RHEA:10164"/>
        <dbReference type="ChEBI" id="CHEBI:15377"/>
        <dbReference type="ChEBI" id="CHEBI:58289"/>
        <dbReference type="ChEBI" id="CHEBI:58702"/>
        <dbReference type="EC" id="4.2.1.11"/>
    </reaction>
</comment>
<comment type="cofactor">
    <cofactor evidence="1">
        <name>Mg(2+)</name>
        <dbReference type="ChEBI" id="CHEBI:18420"/>
    </cofactor>
    <text evidence="1">Binds a second Mg(2+) ion via substrate during catalysis.</text>
</comment>
<comment type="pathway">
    <text evidence="1">Carbohydrate degradation; glycolysis; pyruvate from D-glyceraldehyde 3-phosphate: step 4/5.</text>
</comment>
<comment type="subunit">
    <text evidence="1">Component of the RNA degradosome, a multiprotein complex involved in RNA processing and mRNA degradation.</text>
</comment>
<comment type="subcellular location">
    <subcellularLocation>
        <location evidence="1">Cytoplasm</location>
    </subcellularLocation>
    <subcellularLocation>
        <location evidence="1">Secreted</location>
    </subcellularLocation>
    <subcellularLocation>
        <location evidence="1">Cell surface</location>
    </subcellularLocation>
    <text evidence="1">Fractions of enolase are present in both the cytoplasm and on the cell surface.</text>
</comment>
<comment type="similarity">
    <text evidence="1">Belongs to the enolase family.</text>
</comment>
<sequence>MSKIVKVLGREIIDSRGNPTVEAEVHLESGFVGMAAAPSGASTGSREALELRDGDKSRFLGKGVLKAIAAVNGPIAEALIGKDAKNQAEIDQIMIDLDGTENKAKFGANAILAVSLANAKAAAAAKSMPLYAHIAELNGTPGVFSMPLPMMNIINGGEHADNNVDIQEFMIQPVGAKTLKEAVRMGAEVFHNLAKVLKSKGYSTAVGDEGGFAPNLKSNAEALEVIAEAVAAAGYELGKDVTLAMDCAASEFYNKEDGIYDLKGEGKKFTAEEFNHYLAGLVEQFPIVSIEDGLDESDWAGFKHQTELLGDKIQLVGDDLFVTNTKILARGIEEGITNSILIKFNQIGSLTETLAAIKMAKDAGFTAVISHRSGETEDATIADLAVGTAAGQIKTGSMSRSDRVAKYNQLIRIEEALGELAPFNGLKEVKGQ</sequence>